<gene>
    <name evidence="1" type="primary">hisF</name>
    <name type="ordered locus">SG2107</name>
</gene>
<proteinExistence type="inferred from homology"/>
<accession>B5RBR7</accession>
<feature type="chain" id="PRO_1000190601" description="Imidazole glycerol phosphate synthase subunit HisF">
    <location>
        <begin position="1"/>
        <end position="258"/>
    </location>
</feature>
<feature type="active site" evidence="1">
    <location>
        <position position="11"/>
    </location>
</feature>
<feature type="active site" evidence="1">
    <location>
        <position position="130"/>
    </location>
</feature>
<comment type="function">
    <text evidence="1">IGPS catalyzes the conversion of PRFAR and glutamine to IGP, AICAR and glutamate. The HisF subunit catalyzes the cyclization activity that produces IGP and AICAR from PRFAR using the ammonia provided by the HisH subunit.</text>
</comment>
<comment type="catalytic activity">
    <reaction evidence="1">
        <text>5-[(5-phospho-1-deoxy-D-ribulos-1-ylimino)methylamino]-1-(5-phospho-beta-D-ribosyl)imidazole-4-carboxamide + L-glutamine = D-erythro-1-(imidazol-4-yl)glycerol 3-phosphate + 5-amino-1-(5-phospho-beta-D-ribosyl)imidazole-4-carboxamide + L-glutamate + H(+)</text>
        <dbReference type="Rhea" id="RHEA:24793"/>
        <dbReference type="ChEBI" id="CHEBI:15378"/>
        <dbReference type="ChEBI" id="CHEBI:29985"/>
        <dbReference type="ChEBI" id="CHEBI:58278"/>
        <dbReference type="ChEBI" id="CHEBI:58359"/>
        <dbReference type="ChEBI" id="CHEBI:58475"/>
        <dbReference type="ChEBI" id="CHEBI:58525"/>
        <dbReference type="EC" id="4.3.2.10"/>
    </reaction>
</comment>
<comment type="pathway">
    <text evidence="1">Amino-acid biosynthesis; L-histidine biosynthesis; L-histidine from 5-phospho-alpha-D-ribose 1-diphosphate: step 5/9.</text>
</comment>
<comment type="subunit">
    <text evidence="1">Heterodimer of HisH and HisF.</text>
</comment>
<comment type="subcellular location">
    <subcellularLocation>
        <location evidence="1">Cytoplasm</location>
    </subcellularLocation>
</comment>
<comment type="similarity">
    <text evidence="1">Belongs to the HisA/HisF family.</text>
</comment>
<sequence>MLAKRIIPCLDVRDGQVVKGVQFRNHEIIGDIVPLAKRYADEGADELVFYDITASSDGRVVDKSWVARVAEVIDIPFCVAGGIRSIDDAAKILSFGADKISINSPALADPTLITRLADRFGVQCIVVGIDTWFDDATGKYHVNQYTGDENRTRVTQWETLDWVQEVQQRGAGEIVLNMMNQDGVRNGYDLTQLKKVRDVCRVPLIASGGAGTMEHFLEAFRDADVDGALAASVFHKQIINIGELKAYLAGQGVEIRIC</sequence>
<protein>
    <recommendedName>
        <fullName evidence="1">Imidazole glycerol phosphate synthase subunit HisF</fullName>
        <ecNumber evidence="1">4.3.2.10</ecNumber>
    </recommendedName>
    <alternativeName>
        <fullName evidence="1">IGP synthase cyclase subunit</fullName>
    </alternativeName>
    <alternativeName>
        <fullName evidence="1">IGP synthase subunit HisF</fullName>
    </alternativeName>
    <alternativeName>
        <fullName evidence="1">ImGP synthase subunit HisF</fullName>
        <shortName evidence="1">IGPS subunit HisF</shortName>
    </alternativeName>
</protein>
<dbReference type="EC" id="4.3.2.10" evidence="1"/>
<dbReference type="EMBL" id="AM933173">
    <property type="protein sequence ID" value="CAR37948.1"/>
    <property type="molecule type" value="Genomic_DNA"/>
</dbReference>
<dbReference type="RefSeq" id="WP_000880125.1">
    <property type="nucleotide sequence ID" value="NC_011274.1"/>
</dbReference>
<dbReference type="SMR" id="B5RBR7"/>
<dbReference type="KEGG" id="seg:SG2107"/>
<dbReference type="HOGENOM" id="CLU_048577_4_0_6"/>
<dbReference type="UniPathway" id="UPA00031">
    <property type="reaction ID" value="UER00010"/>
</dbReference>
<dbReference type="Proteomes" id="UP000008321">
    <property type="component" value="Chromosome"/>
</dbReference>
<dbReference type="GO" id="GO:0005737">
    <property type="term" value="C:cytoplasm"/>
    <property type="evidence" value="ECO:0007669"/>
    <property type="project" value="UniProtKB-SubCell"/>
</dbReference>
<dbReference type="GO" id="GO:0000107">
    <property type="term" value="F:imidazoleglycerol-phosphate synthase activity"/>
    <property type="evidence" value="ECO:0007669"/>
    <property type="project" value="UniProtKB-UniRule"/>
</dbReference>
<dbReference type="GO" id="GO:0016829">
    <property type="term" value="F:lyase activity"/>
    <property type="evidence" value="ECO:0007669"/>
    <property type="project" value="UniProtKB-KW"/>
</dbReference>
<dbReference type="GO" id="GO:0000105">
    <property type="term" value="P:L-histidine biosynthetic process"/>
    <property type="evidence" value="ECO:0007669"/>
    <property type="project" value="UniProtKB-UniRule"/>
</dbReference>
<dbReference type="CDD" id="cd04731">
    <property type="entry name" value="HisF"/>
    <property type="match status" value="1"/>
</dbReference>
<dbReference type="FunFam" id="3.20.20.70:FF:000006">
    <property type="entry name" value="Imidazole glycerol phosphate synthase subunit HisF"/>
    <property type="match status" value="1"/>
</dbReference>
<dbReference type="Gene3D" id="3.20.20.70">
    <property type="entry name" value="Aldolase class I"/>
    <property type="match status" value="1"/>
</dbReference>
<dbReference type="HAMAP" id="MF_01013">
    <property type="entry name" value="HisF"/>
    <property type="match status" value="1"/>
</dbReference>
<dbReference type="InterPro" id="IPR013785">
    <property type="entry name" value="Aldolase_TIM"/>
</dbReference>
<dbReference type="InterPro" id="IPR006062">
    <property type="entry name" value="His_biosynth"/>
</dbReference>
<dbReference type="InterPro" id="IPR004651">
    <property type="entry name" value="HisF"/>
</dbReference>
<dbReference type="InterPro" id="IPR050064">
    <property type="entry name" value="IGPS_HisA/HisF"/>
</dbReference>
<dbReference type="InterPro" id="IPR011060">
    <property type="entry name" value="RibuloseP-bd_barrel"/>
</dbReference>
<dbReference type="NCBIfam" id="TIGR00735">
    <property type="entry name" value="hisF"/>
    <property type="match status" value="1"/>
</dbReference>
<dbReference type="PANTHER" id="PTHR21235:SF2">
    <property type="entry name" value="IMIDAZOLE GLYCEROL PHOSPHATE SYNTHASE HISHF"/>
    <property type="match status" value="1"/>
</dbReference>
<dbReference type="PANTHER" id="PTHR21235">
    <property type="entry name" value="IMIDAZOLE GLYCEROL PHOSPHATE SYNTHASE SUBUNIT HISF/H IGP SYNTHASE SUBUNIT HISF/H"/>
    <property type="match status" value="1"/>
</dbReference>
<dbReference type="Pfam" id="PF00977">
    <property type="entry name" value="His_biosynth"/>
    <property type="match status" value="1"/>
</dbReference>
<dbReference type="SUPFAM" id="SSF51366">
    <property type="entry name" value="Ribulose-phoshate binding barrel"/>
    <property type="match status" value="1"/>
</dbReference>
<keyword id="KW-0028">Amino-acid biosynthesis</keyword>
<keyword id="KW-0963">Cytoplasm</keyword>
<keyword id="KW-0368">Histidine biosynthesis</keyword>
<keyword id="KW-0456">Lyase</keyword>
<reference key="1">
    <citation type="journal article" date="2008" name="Genome Res.">
        <title>Comparative genome analysis of Salmonella enteritidis PT4 and Salmonella gallinarum 287/91 provides insights into evolutionary and host adaptation pathways.</title>
        <authorList>
            <person name="Thomson N.R."/>
            <person name="Clayton D.J."/>
            <person name="Windhorst D."/>
            <person name="Vernikos G."/>
            <person name="Davidson S."/>
            <person name="Churcher C."/>
            <person name="Quail M.A."/>
            <person name="Stevens M."/>
            <person name="Jones M.A."/>
            <person name="Watson M."/>
            <person name="Barron A."/>
            <person name="Layton A."/>
            <person name="Pickard D."/>
            <person name="Kingsley R.A."/>
            <person name="Bignell A."/>
            <person name="Clark L."/>
            <person name="Harris B."/>
            <person name="Ormond D."/>
            <person name="Abdellah Z."/>
            <person name="Brooks K."/>
            <person name="Cherevach I."/>
            <person name="Chillingworth T."/>
            <person name="Woodward J."/>
            <person name="Norberczak H."/>
            <person name="Lord A."/>
            <person name="Arrowsmith C."/>
            <person name="Jagels K."/>
            <person name="Moule S."/>
            <person name="Mungall K."/>
            <person name="Saunders M."/>
            <person name="Whitehead S."/>
            <person name="Chabalgoity J.A."/>
            <person name="Maskell D."/>
            <person name="Humphreys T."/>
            <person name="Roberts M."/>
            <person name="Barrow P.A."/>
            <person name="Dougan G."/>
            <person name="Parkhill J."/>
        </authorList>
    </citation>
    <scope>NUCLEOTIDE SEQUENCE [LARGE SCALE GENOMIC DNA]</scope>
    <source>
        <strain>287/91 / NCTC 13346</strain>
    </source>
</reference>
<organism>
    <name type="scientific">Salmonella gallinarum (strain 287/91 / NCTC 13346)</name>
    <dbReference type="NCBI Taxonomy" id="550538"/>
    <lineage>
        <taxon>Bacteria</taxon>
        <taxon>Pseudomonadati</taxon>
        <taxon>Pseudomonadota</taxon>
        <taxon>Gammaproteobacteria</taxon>
        <taxon>Enterobacterales</taxon>
        <taxon>Enterobacteriaceae</taxon>
        <taxon>Salmonella</taxon>
    </lineage>
</organism>
<evidence type="ECO:0000255" key="1">
    <source>
        <dbReference type="HAMAP-Rule" id="MF_01013"/>
    </source>
</evidence>
<name>HIS6_SALG2</name>